<accession>Q6MB26</accession>
<organism>
    <name type="scientific">Protochlamydia amoebophila (strain UWE25)</name>
    <dbReference type="NCBI Taxonomy" id="264201"/>
    <lineage>
        <taxon>Bacteria</taxon>
        <taxon>Pseudomonadati</taxon>
        <taxon>Chlamydiota</taxon>
        <taxon>Chlamydiia</taxon>
        <taxon>Parachlamydiales</taxon>
        <taxon>Parachlamydiaceae</taxon>
        <taxon>Candidatus Protochlamydia</taxon>
    </lineage>
</organism>
<dbReference type="EMBL" id="BX908798">
    <property type="protein sequence ID" value="CAF24223.1"/>
    <property type="molecule type" value="Genomic_DNA"/>
</dbReference>
<dbReference type="SMR" id="Q6MB26"/>
<dbReference type="STRING" id="264201.pc1499"/>
<dbReference type="eggNOG" id="COG0443">
    <property type="taxonomic scope" value="Bacteria"/>
</dbReference>
<dbReference type="HOGENOM" id="CLU_005965_2_1_0"/>
<dbReference type="Proteomes" id="UP000000529">
    <property type="component" value="Chromosome"/>
</dbReference>
<dbReference type="GO" id="GO:0005524">
    <property type="term" value="F:ATP binding"/>
    <property type="evidence" value="ECO:0007669"/>
    <property type="project" value="UniProtKB-UniRule"/>
</dbReference>
<dbReference type="GO" id="GO:0140662">
    <property type="term" value="F:ATP-dependent protein folding chaperone"/>
    <property type="evidence" value="ECO:0007669"/>
    <property type="project" value="InterPro"/>
</dbReference>
<dbReference type="GO" id="GO:0051082">
    <property type="term" value="F:unfolded protein binding"/>
    <property type="evidence" value="ECO:0007669"/>
    <property type="project" value="InterPro"/>
</dbReference>
<dbReference type="CDD" id="cd10234">
    <property type="entry name" value="ASKHA_NBD_HSP70_DnaK-like"/>
    <property type="match status" value="1"/>
</dbReference>
<dbReference type="FunFam" id="2.60.34.10:FF:000014">
    <property type="entry name" value="Chaperone protein DnaK HSP70"/>
    <property type="match status" value="1"/>
</dbReference>
<dbReference type="FunFam" id="1.20.1270.10:FF:000001">
    <property type="entry name" value="Molecular chaperone DnaK"/>
    <property type="match status" value="1"/>
</dbReference>
<dbReference type="FunFam" id="3.30.420.40:FF:000004">
    <property type="entry name" value="Molecular chaperone DnaK"/>
    <property type="match status" value="1"/>
</dbReference>
<dbReference type="FunFam" id="3.90.640.10:FF:000003">
    <property type="entry name" value="Molecular chaperone DnaK"/>
    <property type="match status" value="1"/>
</dbReference>
<dbReference type="Gene3D" id="1.20.1270.10">
    <property type="match status" value="1"/>
</dbReference>
<dbReference type="Gene3D" id="3.30.420.40">
    <property type="match status" value="2"/>
</dbReference>
<dbReference type="Gene3D" id="3.90.640.10">
    <property type="entry name" value="Actin, Chain A, domain 4"/>
    <property type="match status" value="1"/>
</dbReference>
<dbReference type="Gene3D" id="2.60.34.10">
    <property type="entry name" value="Substrate Binding Domain Of DNAk, Chain A, domain 1"/>
    <property type="match status" value="1"/>
</dbReference>
<dbReference type="HAMAP" id="MF_00332">
    <property type="entry name" value="DnaK"/>
    <property type="match status" value="1"/>
</dbReference>
<dbReference type="InterPro" id="IPR043129">
    <property type="entry name" value="ATPase_NBD"/>
</dbReference>
<dbReference type="InterPro" id="IPR012725">
    <property type="entry name" value="Chaperone_DnaK"/>
</dbReference>
<dbReference type="InterPro" id="IPR018181">
    <property type="entry name" value="Heat_shock_70_CS"/>
</dbReference>
<dbReference type="InterPro" id="IPR029048">
    <property type="entry name" value="HSP70_C_sf"/>
</dbReference>
<dbReference type="InterPro" id="IPR029047">
    <property type="entry name" value="HSP70_peptide-bd_sf"/>
</dbReference>
<dbReference type="InterPro" id="IPR013126">
    <property type="entry name" value="Hsp_70_fam"/>
</dbReference>
<dbReference type="NCBIfam" id="NF001413">
    <property type="entry name" value="PRK00290.1"/>
    <property type="match status" value="1"/>
</dbReference>
<dbReference type="NCBIfam" id="NF003520">
    <property type="entry name" value="PRK05183.1"/>
    <property type="match status" value="1"/>
</dbReference>
<dbReference type="NCBIfam" id="TIGR02350">
    <property type="entry name" value="prok_dnaK"/>
    <property type="match status" value="1"/>
</dbReference>
<dbReference type="PANTHER" id="PTHR19375">
    <property type="entry name" value="HEAT SHOCK PROTEIN 70KDA"/>
    <property type="match status" value="1"/>
</dbReference>
<dbReference type="Pfam" id="PF00012">
    <property type="entry name" value="HSP70"/>
    <property type="match status" value="1"/>
</dbReference>
<dbReference type="PRINTS" id="PR00301">
    <property type="entry name" value="HEATSHOCK70"/>
</dbReference>
<dbReference type="SUPFAM" id="SSF53067">
    <property type="entry name" value="Actin-like ATPase domain"/>
    <property type="match status" value="2"/>
</dbReference>
<dbReference type="SUPFAM" id="SSF100920">
    <property type="entry name" value="Heat shock protein 70kD (HSP70), peptide-binding domain"/>
    <property type="match status" value="1"/>
</dbReference>
<dbReference type="PROSITE" id="PS00297">
    <property type="entry name" value="HSP70_1"/>
    <property type="match status" value="1"/>
</dbReference>
<dbReference type="PROSITE" id="PS00329">
    <property type="entry name" value="HSP70_2"/>
    <property type="match status" value="1"/>
</dbReference>
<dbReference type="PROSITE" id="PS01036">
    <property type="entry name" value="HSP70_3"/>
    <property type="match status" value="1"/>
</dbReference>
<evidence type="ECO:0000255" key="1">
    <source>
        <dbReference type="HAMAP-Rule" id="MF_00332"/>
    </source>
</evidence>
<evidence type="ECO:0000256" key="2">
    <source>
        <dbReference type="SAM" id="MobiDB-lite"/>
    </source>
</evidence>
<proteinExistence type="inferred from homology"/>
<feature type="chain" id="PRO_0000225989" description="Chaperone protein DnaK">
    <location>
        <begin position="1"/>
        <end position="654"/>
    </location>
</feature>
<feature type="region of interest" description="Disordered" evidence="2">
    <location>
        <begin position="592"/>
        <end position="654"/>
    </location>
</feature>
<feature type="compositionally biased region" description="Polar residues" evidence="2">
    <location>
        <begin position="608"/>
        <end position="621"/>
    </location>
</feature>
<feature type="compositionally biased region" description="Low complexity" evidence="2">
    <location>
        <begin position="622"/>
        <end position="636"/>
    </location>
</feature>
<feature type="modified residue" description="Phosphothreonine; by autocatalysis" evidence="1">
    <location>
        <position position="205"/>
    </location>
</feature>
<comment type="function">
    <text evidence="1">Acts as a chaperone.</text>
</comment>
<comment type="induction">
    <text evidence="1">By stress conditions e.g. heat shock.</text>
</comment>
<comment type="similarity">
    <text evidence="1">Belongs to the heat shock protein 70 family.</text>
</comment>
<gene>
    <name evidence="1" type="primary">dnaK</name>
    <name type="ordered locus">pc1499</name>
</gene>
<protein>
    <recommendedName>
        <fullName evidence="1">Chaperone protein DnaK</fullName>
    </recommendedName>
    <alternativeName>
        <fullName evidence="1">HSP70</fullName>
    </alternativeName>
    <alternativeName>
        <fullName evidence="1">Heat shock 70 kDa protein</fullName>
    </alternativeName>
    <alternativeName>
        <fullName evidence="1">Heat shock protein 70</fullName>
    </alternativeName>
</protein>
<reference key="1">
    <citation type="journal article" date="2004" name="Science">
        <title>Illuminating the evolutionary history of chlamydiae.</title>
        <authorList>
            <person name="Horn M."/>
            <person name="Collingro A."/>
            <person name="Schmitz-Esser S."/>
            <person name="Beier C.L."/>
            <person name="Purkhold U."/>
            <person name="Fartmann B."/>
            <person name="Brandt P."/>
            <person name="Nyakatura G.J."/>
            <person name="Droege M."/>
            <person name="Frishman D."/>
            <person name="Rattei T."/>
            <person name="Mewes H.-W."/>
            <person name="Wagner M."/>
        </authorList>
    </citation>
    <scope>NUCLEOTIDE SEQUENCE [LARGE SCALE GENOMIC DNA]</scope>
    <source>
        <strain>UWE25</strain>
    </source>
</reference>
<name>DNAK_PARUW</name>
<sequence length="654" mass="71371">MTMSQSQTKKGRIIGIDLGTTNSCVAVMEGGAPKVIASAEGTRTTPSVVAYKGNERLVGIPAKRQAVTNPENTITSSKRFIGRKYQEVLSEIKTVPYKVTNNNNGDAVFEIQGKIVTPEEIAAQILIKMKETAEAYLGEKITEAVITVPAYFNDSQRQSTKDAGRIAGLDVKRIIPEPTAAALAYGLDKENADKKIAVFDLGGGTFDISVLEIGDGVFEVLSTSGDTHLGGDDFDNAILNWMLETFKQEQGIDLRNDKMALQRLRDAAEKAKIELSGVQQTEINQPFITMDASGPKHLTMTLTRSKLESLTHDLIERTREPCLKALKDSGLNKDDISEVILVGGMSRMPAVQEVVKSIFGKEGHKGVNPDEVVAVGAAIQGGVLTGVVKDVLLLDVTPLTLGIETLGGVMTPLVERNTTIPTQKKQIFSTAADNQPAVTIRVLQGERKMANDNKEIGRFDLADIPPSPRGTPQIEVAFDIDADGILHVSAKDLSSGKEQKIRIEAQSGLQEEEIKRMVRDAEEHAEEDKKRKEEVEIRNEADSLAFRAQKALDEYKDKVPQQIADDISNKIEAVKKALETTDIARIRSAKDELERQMQQIGEVMSKAAGQSETQSTGPGSYQESSNQSSQHQTNNNKPDDIEEAEVEILDDKKP</sequence>
<keyword id="KW-0067">ATP-binding</keyword>
<keyword id="KW-0143">Chaperone</keyword>
<keyword id="KW-0547">Nucleotide-binding</keyword>
<keyword id="KW-0597">Phosphoprotein</keyword>
<keyword id="KW-1185">Reference proteome</keyword>
<keyword id="KW-0346">Stress response</keyword>